<reference key="1">
    <citation type="journal article" date="2004" name="Genome Res.">
        <title>The status, quality, and expansion of the NIH full-length cDNA project: the Mammalian Gene Collection (MGC).</title>
        <authorList>
            <consortium name="The MGC Project Team"/>
        </authorList>
    </citation>
    <scope>NUCLEOTIDE SEQUENCE [LARGE SCALE MRNA]</scope>
    <source>
        <tissue>Thymus</tissue>
    </source>
</reference>
<reference key="2">
    <citation type="journal article" date="1998" name="Proc. Natl. Acad. Sci. U.S.A.">
        <title>Tyrosylprotein sulfotransferase: purification and molecular cloning of an enzyme that catalyzes tyrosine O-sulfation, a common posttranslational modification of eukaryotic proteins.</title>
        <authorList>
            <person name="Ouyang Y.-B."/>
            <person name="Lane W.S."/>
            <person name="Moore K.L."/>
        </authorList>
    </citation>
    <scope>PARTIAL PROTEIN SEQUENCE</scope>
    <scope>IDENTIFICATION BY MASS SPECTROMETRY</scope>
    <scope>CATALYTIC ACTIVITY</scope>
    <scope>FUNCTION</scope>
    <scope>SUBCELLULAR LOCATION</scope>
    <scope>TOPOLOGY</scope>
</reference>
<proteinExistence type="evidence at protein level"/>
<evidence type="ECO:0000250" key="1">
    <source>
        <dbReference type="UniProtKB" id="O60507"/>
    </source>
</evidence>
<evidence type="ECO:0000250" key="2">
    <source>
        <dbReference type="UniProtKB" id="O60704"/>
    </source>
</evidence>
<evidence type="ECO:0000255" key="3"/>
<evidence type="ECO:0000269" key="4">
    <source>
    </source>
</evidence>
<evidence type="ECO:0000305" key="5"/>
<evidence type="ECO:0000305" key="6">
    <source>
    </source>
</evidence>
<feature type="chain" id="PRO_0000253722" description="Protein-tyrosine sulfotransferase 1">
    <location>
        <begin position="1"/>
        <end position="370"/>
    </location>
</feature>
<feature type="topological domain" description="Cytoplasmic" evidence="3">
    <location>
        <begin position="1"/>
        <end position="8"/>
    </location>
</feature>
<feature type="transmembrane region" description="Helical; Signal-anchor for type II membrane protein" evidence="3">
    <location>
        <begin position="9"/>
        <end position="25"/>
    </location>
</feature>
<feature type="topological domain" description="Lumenal" evidence="3">
    <location>
        <begin position="26"/>
        <end position="370"/>
    </location>
</feature>
<feature type="region of interest" description="Interaction with peptide substrate" evidence="1">
    <location>
        <begin position="102"/>
        <end position="106"/>
    </location>
</feature>
<feature type="active site" description="Proton donor/acceptor" evidence="2">
    <location>
        <position position="100"/>
    </location>
</feature>
<feature type="binding site" evidence="1">
    <location>
        <begin position="79"/>
        <end position="83"/>
    </location>
    <ligand>
        <name>3'-phosphoadenylyl sulfate</name>
        <dbReference type="ChEBI" id="CHEBI:58339"/>
    </ligand>
</feature>
<feature type="binding site" evidence="1">
    <location>
        <position position="184"/>
    </location>
    <ligand>
        <name>3'-phosphoadenylyl sulfate</name>
        <dbReference type="ChEBI" id="CHEBI:58339"/>
    </ligand>
</feature>
<feature type="binding site" evidence="1">
    <location>
        <position position="192"/>
    </location>
    <ligand>
        <name>3'-phosphoadenylyl sulfate</name>
        <dbReference type="ChEBI" id="CHEBI:58339"/>
    </ligand>
</feature>
<feature type="binding site" evidence="1">
    <location>
        <position position="196"/>
    </location>
    <ligand>
        <name>3'-phosphoadenylyl sulfate</name>
        <dbReference type="ChEBI" id="CHEBI:58339"/>
    </ligand>
</feature>
<feature type="binding site" evidence="1">
    <location>
        <position position="239"/>
    </location>
    <ligand>
        <name>3'-phosphoadenylyl sulfate</name>
        <dbReference type="ChEBI" id="CHEBI:58339"/>
    </ligand>
</feature>
<feature type="binding site" evidence="1">
    <location>
        <begin position="286"/>
        <end position="295"/>
    </location>
    <ligand>
        <name>3'-phosphoadenylyl sulfate</name>
        <dbReference type="ChEBI" id="CHEBI:58339"/>
    </ligand>
</feature>
<feature type="binding site" evidence="1">
    <location>
        <position position="301"/>
    </location>
    <ligand>
        <name>3'-phosphoadenylyl sulfate</name>
        <dbReference type="ChEBI" id="CHEBI:58339"/>
    </ligand>
</feature>
<feature type="site" description="Transition state stabilizer" evidence="2">
    <location>
        <position position="159"/>
    </location>
</feature>
<feature type="site" description="Transition state stabilizer" evidence="2">
    <location>
        <position position="286"/>
    </location>
</feature>
<feature type="glycosylation site" description="N-linked (GlcNAc...) asparagine" evidence="3">
    <location>
        <position position="60"/>
    </location>
</feature>
<feature type="glycosylation site" description="N-linked (GlcNAc...) asparagine" evidence="3">
    <location>
        <position position="262"/>
    </location>
</feature>
<feature type="disulfide bond" evidence="2">
    <location>
        <begin position="97"/>
        <end position="157"/>
    </location>
</feature>
<feature type="disulfide bond" evidence="2">
    <location>
        <begin position="226"/>
        <end position="234"/>
    </location>
</feature>
<keyword id="KW-0903">Direct protein sequencing</keyword>
<keyword id="KW-1015">Disulfide bond</keyword>
<keyword id="KW-0325">Glycoprotein</keyword>
<keyword id="KW-0333">Golgi apparatus</keyword>
<keyword id="KW-0472">Membrane</keyword>
<keyword id="KW-1185">Reference proteome</keyword>
<keyword id="KW-0735">Signal-anchor</keyword>
<keyword id="KW-0808">Transferase</keyword>
<keyword id="KW-0812">Transmembrane</keyword>
<keyword id="KW-1133">Transmembrane helix</keyword>
<accession>Q3KR92</accession>
<name>TPST1_RAT</name>
<organism>
    <name type="scientific">Rattus norvegicus</name>
    <name type="common">Rat</name>
    <dbReference type="NCBI Taxonomy" id="10116"/>
    <lineage>
        <taxon>Eukaryota</taxon>
        <taxon>Metazoa</taxon>
        <taxon>Chordata</taxon>
        <taxon>Craniata</taxon>
        <taxon>Vertebrata</taxon>
        <taxon>Euteleostomi</taxon>
        <taxon>Mammalia</taxon>
        <taxon>Eutheria</taxon>
        <taxon>Euarchontoglires</taxon>
        <taxon>Glires</taxon>
        <taxon>Rodentia</taxon>
        <taxon>Myomorpha</taxon>
        <taxon>Muroidea</taxon>
        <taxon>Muridae</taxon>
        <taxon>Murinae</taxon>
        <taxon>Rattus</taxon>
    </lineage>
</organism>
<protein>
    <recommendedName>
        <fullName>Protein-tyrosine sulfotransferase 1</fullName>
        <ecNumber evidence="4">2.8.2.20</ecNumber>
    </recommendedName>
    <alternativeName>
        <fullName>Tyrosylprotein sulfotransferase 1</fullName>
        <shortName>TPST-1</shortName>
    </alternativeName>
</protein>
<sequence length="370" mass="42135">MVGKLKQNLLLACLVISSVTVFYLGQHAMECHHRIEERSQPARLENPKATVRTGLDIKANKTFTYHKNMPLIFIGGVPRSGTTLMRAMLDAHPDIRCGEETRVIPRILALKQMWSRSSKEKIRLDEAGVTDEVLDSAMQAFLLEVIVKHGEPAPYLCNKDPFALKSLTYLARLFPNAKFLLMVRDGRASVHSMISRKVTIAGFDLNSYRDCLTKWNRAIETMYNQCMEVGYKKCMLVHYEQLVLHPERWMRTLLKFLHIPWNHSVLHHEEMIGKAGGVSLSKVERSTDQVIKPVNVGALSKWVGKIPPDVLQDMAVIAPMLAKLGYDPYANPPNYGKPDPKILENTRRVHKGEFQLPDFLKEKPQTEQVE</sequence>
<comment type="function">
    <text evidence="4">Catalyzes the O-sulfation of tyrosine residues within acidic motifs of polypeptides, using 3'-phosphoadenylyl sulfate (PAPS) as cosubstrate.</text>
</comment>
<comment type="catalytic activity">
    <reaction evidence="4">
        <text>L-tyrosyl-[protein] + 3'-phosphoadenylyl sulfate = O-sulfo-L-tyrosine-[protein] + adenosine 3',5'-bisphosphate + H(+)</text>
        <dbReference type="Rhea" id="RHEA:16801"/>
        <dbReference type="Rhea" id="RHEA-COMP:10136"/>
        <dbReference type="Rhea" id="RHEA-COMP:11688"/>
        <dbReference type="ChEBI" id="CHEBI:15378"/>
        <dbReference type="ChEBI" id="CHEBI:46858"/>
        <dbReference type="ChEBI" id="CHEBI:58339"/>
        <dbReference type="ChEBI" id="CHEBI:58343"/>
        <dbReference type="ChEBI" id="CHEBI:65286"/>
        <dbReference type="EC" id="2.8.2.20"/>
    </reaction>
</comment>
<comment type="subunit">
    <text evidence="1">Homodimer. Can also form heterodimers with TPST2.</text>
</comment>
<comment type="subcellular location">
    <subcellularLocation>
        <location evidence="6">Golgi apparatus membrane</location>
        <topology evidence="6">Single-pass type II membrane protein</topology>
    </subcellularLocation>
</comment>
<comment type="PTM">
    <text evidence="1">N-glycosylated.</text>
</comment>
<comment type="similarity">
    <text evidence="5">Belongs to the protein sulfotransferase family.</text>
</comment>
<dbReference type="EC" id="2.8.2.20" evidence="4"/>
<dbReference type="EMBL" id="BC105826">
    <property type="protein sequence ID" value="AAI05827.1"/>
    <property type="molecule type" value="mRNA"/>
</dbReference>
<dbReference type="RefSeq" id="NP_001011903.2">
    <property type="nucleotide sequence ID" value="NM_001011903.2"/>
</dbReference>
<dbReference type="RefSeq" id="XP_008767355.1">
    <property type="nucleotide sequence ID" value="XM_008769133.2"/>
</dbReference>
<dbReference type="RefSeq" id="XP_063127234.1">
    <property type="nucleotide sequence ID" value="XM_063271164.1"/>
</dbReference>
<dbReference type="SMR" id="Q3KR92"/>
<dbReference type="FunCoup" id="Q3KR92">
    <property type="interactions" value="338"/>
</dbReference>
<dbReference type="IntAct" id="Q3KR92">
    <property type="interactions" value="1"/>
</dbReference>
<dbReference type="STRING" id="10116.ENSRNOP00000070504"/>
<dbReference type="GlyCosmos" id="Q3KR92">
    <property type="glycosylation" value="2 sites, No reported glycans"/>
</dbReference>
<dbReference type="GlyGen" id="Q3KR92">
    <property type="glycosylation" value="2 sites"/>
</dbReference>
<dbReference type="PhosphoSitePlus" id="Q3KR92"/>
<dbReference type="PaxDb" id="10116-ENSRNOP00000060104"/>
<dbReference type="Ensembl" id="ENSRNOT00000001200.6">
    <property type="protein sequence ID" value="ENSRNOP00000001200.4"/>
    <property type="gene ID" value="ENSRNOG00000000900.7"/>
</dbReference>
<dbReference type="GeneID" id="288617"/>
<dbReference type="KEGG" id="rno:288617"/>
<dbReference type="AGR" id="RGD:1308473"/>
<dbReference type="CTD" id="8460"/>
<dbReference type="RGD" id="1308473">
    <property type="gene designation" value="Tpst1"/>
</dbReference>
<dbReference type="eggNOG" id="KOG3988">
    <property type="taxonomic scope" value="Eukaryota"/>
</dbReference>
<dbReference type="InParanoid" id="Q3KR92"/>
<dbReference type="OrthoDB" id="5552at9989"/>
<dbReference type="PhylomeDB" id="Q3KR92"/>
<dbReference type="TreeFam" id="TF312910"/>
<dbReference type="Reactome" id="R-RNO-156584">
    <property type="pathway name" value="Cytosolic sulfonation of small molecules"/>
</dbReference>
<dbReference type="Reactome" id="R-RNO-163841">
    <property type="pathway name" value="Gamma carboxylation, hypusinylation, hydroxylation, and arylsulfatase activation"/>
</dbReference>
<dbReference type="PRO" id="PR:Q3KR92"/>
<dbReference type="Proteomes" id="UP000002494">
    <property type="component" value="Chromosome 12"/>
</dbReference>
<dbReference type="Bgee" id="ENSRNOG00000000900">
    <property type="expression patterns" value="Expressed in liver and 20 other cell types or tissues"/>
</dbReference>
<dbReference type="ExpressionAtlas" id="Q3KR92">
    <property type="expression patterns" value="baseline and differential"/>
</dbReference>
<dbReference type="GO" id="GO:0005794">
    <property type="term" value="C:Golgi apparatus"/>
    <property type="evidence" value="ECO:0000318"/>
    <property type="project" value="GO_Central"/>
</dbReference>
<dbReference type="GO" id="GO:0005796">
    <property type="term" value="C:Golgi lumen"/>
    <property type="evidence" value="ECO:0000266"/>
    <property type="project" value="RGD"/>
</dbReference>
<dbReference type="GO" id="GO:0000139">
    <property type="term" value="C:Golgi membrane"/>
    <property type="evidence" value="ECO:0000250"/>
    <property type="project" value="UniProtKB"/>
</dbReference>
<dbReference type="GO" id="GO:0005802">
    <property type="term" value="C:trans-Golgi network"/>
    <property type="evidence" value="ECO:0000266"/>
    <property type="project" value="RGD"/>
</dbReference>
<dbReference type="GO" id="GO:0042803">
    <property type="term" value="F:protein homodimerization activity"/>
    <property type="evidence" value="ECO:0000266"/>
    <property type="project" value="RGD"/>
</dbReference>
<dbReference type="GO" id="GO:0008476">
    <property type="term" value="F:protein-tyrosine sulfotransferase activity"/>
    <property type="evidence" value="ECO:0000250"/>
    <property type="project" value="UniProtKB"/>
</dbReference>
<dbReference type="GO" id="GO:0043687">
    <property type="term" value="P:post-translational protein modification"/>
    <property type="evidence" value="ECO:0000250"/>
    <property type="project" value="UniProtKB"/>
</dbReference>
<dbReference type="FunFam" id="3.40.50.300:FF:000290">
    <property type="entry name" value="Protein-tyrosine sulfotransferase"/>
    <property type="match status" value="1"/>
</dbReference>
<dbReference type="Gene3D" id="3.40.50.300">
    <property type="entry name" value="P-loop containing nucleotide triphosphate hydrolases"/>
    <property type="match status" value="1"/>
</dbReference>
<dbReference type="InterPro" id="IPR027417">
    <property type="entry name" value="P-loop_NTPase"/>
</dbReference>
<dbReference type="InterPro" id="IPR026634">
    <property type="entry name" value="TPST-like"/>
</dbReference>
<dbReference type="PANTHER" id="PTHR12788:SF4">
    <property type="entry name" value="PROTEIN-TYROSINE SULFOTRANSFERASE 1"/>
    <property type="match status" value="1"/>
</dbReference>
<dbReference type="PANTHER" id="PTHR12788">
    <property type="entry name" value="PROTEIN-TYROSINE SULFOTRANSFERASE 2"/>
    <property type="match status" value="1"/>
</dbReference>
<dbReference type="Pfam" id="PF13469">
    <property type="entry name" value="Sulfotransfer_3"/>
    <property type="match status" value="1"/>
</dbReference>
<dbReference type="SUPFAM" id="SSF52540">
    <property type="entry name" value="P-loop containing nucleoside triphosphate hydrolases"/>
    <property type="match status" value="1"/>
</dbReference>
<gene>
    <name type="primary">Tpst1</name>
</gene>